<evidence type="ECO:0000255" key="1">
    <source>
        <dbReference type="HAMAP-Rule" id="MF_00829"/>
    </source>
</evidence>
<protein>
    <recommendedName>
        <fullName evidence="1">UPF0435 protein OB1527</fullName>
    </recommendedName>
</protein>
<keyword id="KW-1185">Reference proteome</keyword>
<organism>
    <name type="scientific">Oceanobacillus iheyensis (strain DSM 14371 / CIP 107618 / JCM 11309 / KCTC 3954 / HTE831)</name>
    <dbReference type="NCBI Taxonomy" id="221109"/>
    <lineage>
        <taxon>Bacteria</taxon>
        <taxon>Bacillati</taxon>
        <taxon>Bacillota</taxon>
        <taxon>Bacilli</taxon>
        <taxon>Bacillales</taxon>
        <taxon>Bacillaceae</taxon>
        <taxon>Oceanobacillus</taxon>
    </lineage>
</organism>
<accession>Q8ER04</accession>
<dbReference type="EMBL" id="BA000028">
    <property type="protein sequence ID" value="BAC13483.1"/>
    <property type="molecule type" value="Genomic_DNA"/>
</dbReference>
<dbReference type="RefSeq" id="WP_011065927.1">
    <property type="nucleotide sequence ID" value="NC_004193.1"/>
</dbReference>
<dbReference type="SMR" id="Q8ER04"/>
<dbReference type="STRING" id="221109.gene:10733767"/>
<dbReference type="KEGG" id="oih:OB1527"/>
<dbReference type="eggNOG" id="COG4840">
    <property type="taxonomic scope" value="Bacteria"/>
</dbReference>
<dbReference type="HOGENOM" id="CLU_199533_1_0_9"/>
<dbReference type="OrthoDB" id="2361695at2"/>
<dbReference type="PhylomeDB" id="Q8ER04"/>
<dbReference type="Proteomes" id="UP000000822">
    <property type="component" value="Chromosome"/>
</dbReference>
<dbReference type="HAMAP" id="MF_00829">
    <property type="entry name" value="UPF0435"/>
    <property type="match status" value="1"/>
</dbReference>
<dbReference type="InterPro" id="IPR009507">
    <property type="entry name" value="UPF0435"/>
</dbReference>
<dbReference type="Pfam" id="PF06569">
    <property type="entry name" value="DUF1128"/>
    <property type="match status" value="1"/>
</dbReference>
<name>Y1527_OCEIH</name>
<feature type="chain" id="PRO_0000291414" description="UPF0435 protein OB1527">
    <location>
        <begin position="1"/>
        <end position="73"/>
    </location>
</feature>
<gene>
    <name type="ordered locus">OB1527</name>
</gene>
<comment type="similarity">
    <text evidence="1">Belongs to the UPF0435 family.</text>
</comment>
<sequence>MNLDQPSTENMKYILDTLAEELQIVNRSIMEVEDYNLDKYEDLKMMYEMVKTKGQLSALEKQAFIQELSSIRK</sequence>
<reference key="1">
    <citation type="journal article" date="2002" name="Nucleic Acids Res.">
        <title>Genome sequence of Oceanobacillus iheyensis isolated from the Iheya Ridge and its unexpected adaptive capabilities to extreme environments.</title>
        <authorList>
            <person name="Takami H."/>
            <person name="Takaki Y."/>
            <person name="Uchiyama I."/>
        </authorList>
    </citation>
    <scope>NUCLEOTIDE SEQUENCE [LARGE SCALE GENOMIC DNA]</scope>
    <source>
        <strain>DSM 14371 / CIP 107618 / JCM 11309 / KCTC 3954 / HTE831</strain>
    </source>
</reference>
<proteinExistence type="inferred from homology"/>